<feature type="chain" id="PRO_0000160632" description="Uncharacterized HTH-type transcriptional regulator MJ0361">
    <location>
        <begin position="1"/>
        <end position="107"/>
    </location>
</feature>
<sequence>MILKILAKKHVKDVLKLLNSKDMYFSELQKTLNLHPKILDSILSDLVNEGFVEKREGESPYKFGKVYYSITPRGKRALEILDLIETFDTLREGQDIVINYKIVNSTA</sequence>
<keyword id="KW-0238">DNA-binding</keyword>
<keyword id="KW-1185">Reference proteome</keyword>
<keyword id="KW-0804">Transcription</keyword>
<keyword id="KW-0805">Transcription regulation</keyword>
<organism>
    <name type="scientific">Methanocaldococcus jannaschii (strain ATCC 43067 / DSM 2661 / JAL-1 / JCM 10045 / NBRC 100440)</name>
    <name type="common">Methanococcus jannaschii</name>
    <dbReference type="NCBI Taxonomy" id="243232"/>
    <lineage>
        <taxon>Archaea</taxon>
        <taxon>Methanobacteriati</taxon>
        <taxon>Methanobacteriota</taxon>
        <taxon>Methanomada group</taxon>
        <taxon>Methanococci</taxon>
        <taxon>Methanococcales</taxon>
        <taxon>Methanocaldococcaceae</taxon>
        <taxon>Methanocaldococcus</taxon>
    </lineage>
</organism>
<proteinExistence type="predicted"/>
<accession>Q57807</accession>
<dbReference type="EMBL" id="L77117">
    <property type="protein sequence ID" value="AAB98353.1"/>
    <property type="molecule type" value="Genomic_DNA"/>
</dbReference>
<dbReference type="PIR" id="A64345">
    <property type="entry name" value="A64345"/>
</dbReference>
<dbReference type="RefSeq" id="WP_010869860.1">
    <property type="nucleotide sequence ID" value="NC_000909.1"/>
</dbReference>
<dbReference type="SMR" id="Q57807"/>
<dbReference type="STRING" id="243232.MJ_0361"/>
<dbReference type="PaxDb" id="243232-MJ_0361"/>
<dbReference type="EnsemblBacteria" id="AAB98353">
    <property type="protein sequence ID" value="AAB98353"/>
    <property type="gene ID" value="MJ_0361"/>
</dbReference>
<dbReference type="GeneID" id="1451218"/>
<dbReference type="KEGG" id="mja:MJ_0361"/>
<dbReference type="eggNOG" id="arCOG01057">
    <property type="taxonomic scope" value="Archaea"/>
</dbReference>
<dbReference type="HOGENOM" id="CLU_153628_1_0_2"/>
<dbReference type="InParanoid" id="Q57807"/>
<dbReference type="OrthoDB" id="61586at2157"/>
<dbReference type="PhylomeDB" id="Q57807"/>
<dbReference type="Proteomes" id="UP000000805">
    <property type="component" value="Chromosome"/>
</dbReference>
<dbReference type="GO" id="GO:0003677">
    <property type="term" value="F:DNA binding"/>
    <property type="evidence" value="ECO:0007669"/>
    <property type="project" value="UniProtKB-KW"/>
</dbReference>
<dbReference type="CDD" id="cd00090">
    <property type="entry name" value="HTH_ARSR"/>
    <property type="match status" value="1"/>
</dbReference>
<dbReference type="Gene3D" id="1.10.10.10">
    <property type="entry name" value="Winged helix-like DNA-binding domain superfamily/Winged helix DNA-binding domain"/>
    <property type="match status" value="1"/>
</dbReference>
<dbReference type="InterPro" id="IPR038723">
    <property type="entry name" value="ArnR1-like_HTH"/>
</dbReference>
<dbReference type="InterPro" id="IPR011991">
    <property type="entry name" value="ArsR-like_HTH"/>
</dbReference>
<dbReference type="InterPro" id="IPR036388">
    <property type="entry name" value="WH-like_DNA-bd_sf"/>
</dbReference>
<dbReference type="InterPro" id="IPR036390">
    <property type="entry name" value="WH_DNA-bd_sf"/>
</dbReference>
<dbReference type="Pfam" id="PF14947">
    <property type="entry name" value="HTH_45"/>
    <property type="match status" value="1"/>
</dbReference>
<dbReference type="SUPFAM" id="SSF46785">
    <property type="entry name" value="Winged helix' DNA-binding domain"/>
    <property type="match status" value="1"/>
</dbReference>
<protein>
    <recommendedName>
        <fullName>Uncharacterized HTH-type transcriptional regulator MJ0361</fullName>
    </recommendedName>
</protein>
<gene>
    <name type="ordered locus">MJ0361</name>
</gene>
<reference key="1">
    <citation type="journal article" date="1996" name="Science">
        <title>Complete genome sequence of the methanogenic archaeon, Methanococcus jannaschii.</title>
        <authorList>
            <person name="Bult C.J."/>
            <person name="White O."/>
            <person name="Olsen G.J."/>
            <person name="Zhou L."/>
            <person name="Fleischmann R.D."/>
            <person name="Sutton G.G."/>
            <person name="Blake J.A."/>
            <person name="FitzGerald L.M."/>
            <person name="Clayton R.A."/>
            <person name="Gocayne J.D."/>
            <person name="Kerlavage A.R."/>
            <person name="Dougherty B.A."/>
            <person name="Tomb J.-F."/>
            <person name="Adams M.D."/>
            <person name="Reich C.I."/>
            <person name="Overbeek R."/>
            <person name="Kirkness E.F."/>
            <person name="Weinstock K.G."/>
            <person name="Merrick J.M."/>
            <person name="Glodek A."/>
            <person name="Scott J.L."/>
            <person name="Geoghagen N.S.M."/>
            <person name="Weidman J.F."/>
            <person name="Fuhrmann J.L."/>
            <person name="Nguyen D."/>
            <person name="Utterback T.R."/>
            <person name="Kelley J.M."/>
            <person name="Peterson J.D."/>
            <person name="Sadow P.W."/>
            <person name="Hanna M.C."/>
            <person name="Cotton M.D."/>
            <person name="Roberts K.M."/>
            <person name="Hurst M.A."/>
            <person name="Kaine B.P."/>
            <person name="Borodovsky M."/>
            <person name="Klenk H.-P."/>
            <person name="Fraser C.M."/>
            <person name="Smith H.O."/>
            <person name="Woese C.R."/>
            <person name="Venter J.C."/>
        </authorList>
    </citation>
    <scope>NUCLEOTIDE SEQUENCE [LARGE SCALE GENOMIC DNA]</scope>
    <source>
        <strain>ATCC 43067 / DSM 2661 / JAL-1 / JCM 10045 / NBRC 100440</strain>
    </source>
</reference>
<name>Y361_METJA</name>